<protein>
    <recommendedName>
        <fullName evidence="1">Large ribosomal subunit protein uL1</fullName>
    </recommendedName>
    <alternativeName>
        <fullName evidence="2">50S ribosomal protein L1</fullName>
    </alternativeName>
</protein>
<sequence>MPKHGKKYRSAIEGRDIAEILTLEDAVAKSLGASFAKFDETVDVAICLGVDPKYSDQMVRGAVTLPHGLGKTVRVAVFCKGDKEAEAKAAGADFAGAEELVAKIKEGWLDFDKAIATPDVMALVGQIGRVLGPRGLMPNAKTGTVTFDVATAVKETKAGRVEFKVDKAGVLHAPLGKVSFGPEKILDNLKSLLDTVNRLKPATAKGTYMKAMAVSTTMGPGFKVDPTTIKKFLEG</sequence>
<reference key="1">
    <citation type="submission" date="2008-10" db="EMBL/GenBank/DDBJ databases">
        <title>Complete sequence of Desulfovibrio vulgaris str. 'Miyazaki F'.</title>
        <authorList>
            <person name="Lucas S."/>
            <person name="Copeland A."/>
            <person name="Lapidus A."/>
            <person name="Glavina del Rio T."/>
            <person name="Dalin E."/>
            <person name="Tice H."/>
            <person name="Bruce D."/>
            <person name="Goodwin L."/>
            <person name="Pitluck S."/>
            <person name="Sims D."/>
            <person name="Brettin T."/>
            <person name="Detter J.C."/>
            <person name="Han C."/>
            <person name="Larimer F."/>
            <person name="Land M."/>
            <person name="Hauser L."/>
            <person name="Kyrpides N."/>
            <person name="Mikhailova N."/>
            <person name="Hazen T.C."/>
            <person name="Richardson P."/>
        </authorList>
    </citation>
    <scope>NUCLEOTIDE SEQUENCE [LARGE SCALE GENOMIC DNA]</scope>
    <source>
        <strain>DSM 19637 / Miyazaki F</strain>
    </source>
</reference>
<dbReference type="EMBL" id="CP001197">
    <property type="protein sequence ID" value="ACL08400.1"/>
    <property type="molecule type" value="Genomic_DNA"/>
</dbReference>
<dbReference type="SMR" id="B8DLM4"/>
<dbReference type="STRING" id="883.DvMF_1452"/>
<dbReference type="KEGG" id="dvm:DvMF_1452"/>
<dbReference type="eggNOG" id="COG0081">
    <property type="taxonomic scope" value="Bacteria"/>
</dbReference>
<dbReference type="HOGENOM" id="CLU_062853_0_0_7"/>
<dbReference type="OrthoDB" id="9803740at2"/>
<dbReference type="GO" id="GO:0022625">
    <property type="term" value="C:cytosolic large ribosomal subunit"/>
    <property type="evidence" value="ECO:0007669"/>
    <property type="project" value="TreeGrafter"/>
</dbReference>
<dbReference type="GO" id="GO:0019843">
    <property type="term" value="F:rRNA binding"/>
    <property type="evidence" value="ECO:0007669"/>
    <property type="project" value="UniProtKB-UniRule"/>
</dbReference>
<dbReference type="GO" id="GO:0003735">
    <property type="term" value="F:structural constituent of ribosome"/>
    <property type="evidence" value="ECO:0007669"/>
    <property type="project" value="InterPro"/>
</dbReference>
<dbReference type="GO" id="GO:0000049">
    <property type="term" value="F:tRNA binding"/>
    <property type="evidence" value="ECO:0007669"/>
    <property type="project" value="UniProtKB-KW"/>
</dbReference>
<dbReference type="GO" id="GO:0006417">
    <property type="term" value="P:regulation of translation"/>
    <property type="evidence" value="ECO:0007669"/>
    <property type="project" value="UniProtKB-KW"/>
</dbReference>
<dbReference type="GO" id="GO:0006412">
    <property type="term" value="P:translation"/>
    <property type="evidence" value="ECO:0007669"/>
    <property type="project" value="UniProtKB-UniRule"/>
</dbReference>
<dbReference type="CDD" id="cd00403">
    <property type="entry name" value="Ribosomal_L1"/>
    <property type="match status" value="1"/>
</dbReference>
<dbReference type="FunFam" id="3.40.50.790:FF:000001">
    <property type="entry name" value="50S ribosomal protein L1"/>
    <property type="match status" value="1"/>
</dbReference>
<dbReference type="Gene3D" id="3.30.190.20">
    <property type="match status" value="1"/>
</dbReference>
<dbReference type="Gene3D" id="3.40.50.790">
    <property type="match status" value="1"/>
</dbReference>
<dbReference type="HAMAP" id="MF_01318_B">
    <property type="entry name" value="Ribosomal_uL1_B"/>
    <property type="match status" value="1"/>
</dbReference>
<dbReference type="InterPro" id="IPR005878">
    <property type="entry name" value="Ribosom_uL1_bac-type"/>
</dbReference>
<dbReference type="InterPro" id="IPR002143">
    <property type="entry name" value="Ribosomal_uL1"/>
</dbReference>
<dbReference type="InterPro" id="IPR023674">
    <property type="entry name" value="Ribosomal_uL1-like"/>
</dbReference>
<dbReference type="InterPro" id="IPR028364">
    <property type="entry name" value="Ribosomal_uL1/biogenesis"/>
</dbReference>
<dbReference type="InterPro" id="IPR016095">
    <property type="entry name" value="Ribosomal_uL1_3-a/b-sand"/>
</dbReference>
<dbReference type="InterPro" id="IPR023673">
    <property type="entry name" value="Ribosomal_uL1_CS"/>
</dbReference>
<dbReference type="NCBIfam" id="TIGR01169">
    <property type="entry name" value="rplA_bact"/>
    <property type="match status" value="1"/>
</dbReference>
<dbReference type="PANTHER" id="PTHR36427">
    <property type="entry name" value="54S RIBOSOMAL PROTEIN L1, MITOCHONDRIAL"/>
    <property type="match status" value="1"/>
</dbReference>
<dbReference type="PANTHER" id="PTHR36427:SF3">
    <property type="entry name" value="LARGE RIBOSOMAL SUBUNIT PROTEIN UL1M"/>
    <property type="match status" value="1"/>
</dbReference>
<dbReference type="Pfam" id="PF00687">
    <property type="entry name" value="Ribosomal_L1"/>
    <property type="match status" value="1"/>
</dbReference>
<dbReference type="PIRSF" id="PIRSF002155">
    <property type="entry name" value="Ribosomal_L1"/>
    <property type="match status" value="1"/>
</dbReference>
<dbReference type="SUPFAM" id="SSF56808">
    <property type="entry name" value="Ribosomal protein L1"/>
    <property type="match status" value="1"/>
</dbReference>
<dbReference type="PROSITE" id="PS01199">
    <property type="entry name" value="RIBOSOMAL_L1"/>
    <property type="match status" value="1"/>
</dbReference>
<organism>
    <name type="scientific">Nitratidesulfovibrio vulgaris (strain DSM 19637 / Miyazaki F)</name>
    <name type="common">Desulfovibrio vulgaris</name>
    <dbReference type="NCBI Taxonomy" id="883"/>
    <lineage>
        <taxon>Bacteria</taxon>
        <taxon>Pseudomonadati</taxon>
        <taxon>Thermodesulfobacteriota</taxon>
        <taxon>Desulfovibrionia</taxon>
        <taxon>Desulfovibrionales</taxon>
        <taxon>Desulfovibrionaceae</taxon>
        <taxon>Nitratidesulfovibrio</taxon>
    </lineage>
</organism>
<keyword id="KW-0678">Repressor</keyword>
<keyword id="KW-0687">Ribonucleoprotein</keyword>
<keyword id="KW-0689">Ribosomal protein</keyword>
<keyword id="KW-0694">RNA-binding</keyword>
<keyword id="KW-0699">rRNA-binding</keyword>
<keyword id="KW-0810">Translation regulation</keyword>
<keyword id="KW-0820">tRNA-binding</keyword>
<accession>B8DLM4</accession>
<name>RL1_NITV9</name>
<gene>
    <name evidence="1" type="primary">rplA</name>
    <name type="ordered locus">DvMF_1452</name>
</gene>
<proteinExistence type="inferred from homology"/>
<comment type="function">
    <text evidence="1">Binds directly to 23S rRNA. The L1 stalk is quite mobile in the ribosome, and is involved in E site tRNA release.</text>
</comment>
<comment type="function">
    <text evidence="1">Protein L1 is also a translational repressor protein, it controls the translation of the L11 operon by binding to its mRNA.</text>
</comment>
<comment type="subunit">
    <text evidence="1">Part of the 50S ribosomal subunit.</text>
</comment>
<comment type="similarity">
    <text evidence="1">Belongs to the universal ribosomal protein uL1 family.</text>
</comment>
<feature type="chain" id="PRO_1000141393" description="Large ribosomal subunit protein uL1">
    <location>
        <begin position="1"/>
        <end position="235"/>
    </location>
</feature>
<evidence type="ECO:0000255" key="1">
    <source>
        <dbReference type="HAMAP-Rule" id="MF_01318"/>
    </source>
</evidence>
<evidence type="ECO:0000305" key="2"/>